<comment type="function">
    <text evidence="5 6">RNA-binding protein that is involved in oogenesis. Required for correct targeting of the migrating anterior follicle cells and the establishment of anterior-posterior polarity in the oocyte. May act as translational repressor of oskar during oogenesis. Function seems to be sensitive to small changes in expression.</text>
</comment>
<comment type="tissue specificity">
    <text evidence="5">Abundantly expressed in ovaries and early embryos.</text>
</comment>
<comment type="developmental stage">
    <text evidence="6">Expressed in the developing ovary. First detectable at stages 3 and 4 of oogenesis but remains very faint until stage 5, when the protein level increases substantially. In stages 4 to 6 is visible throughout the oocyte cytoplasm but is enriched at the osterior pole of the oocyte. During stages 7 to 9 is abundant in the oocyte cytoplasm, with some enrichment at the anterior of the oocyte and around the oocyte cortex. In stage 10 and in later stages is expressed at high levels in the nurse cells (at protein level).</text>
</comment>
<comment type="similarity">
    <text evidence="7">Belongs to the BicC family.</text>
</comment>
<accession>Q24009</accession>
<accession>Q8IP26</accession>
<proteinExistence type="evidence at protein level"/>
<gene>
    <name type="primary">BicC</name>
    <name type="ORF">CG4824</name>
</gene>
<name>BICC_DROME</name>
<reference key="1">
    <citation type="journal article" date="1995" name="EMBO J.">
        <title>Localized Bicaudal-C RNA encodes a protein containing a KH domain, the RNA binding motif of FMR1.</title>
        <authorList>
            <person name="Mahone M."/>
            <person name="Saffman E.E."/>
            <person name="Lasko P.F."/>
        </authorList>
    </citation>
    <scope>NUCLEOTIDE SEQUENCE [MRNA]</scope>
    <scope>FUNCTION</scope>
    <scope>TISSUE SPECIFICITY</scope>
</reference>
<reference key="2">
    <citation type="journal article" date="1997" name="EMBO J.">
        <authorList>
            <person name="Mahone M."/>
            <person name="Saffman E.E."/>
            <person name="Lasko P.F."/>
        </authorList>
    </citation>
    <scope>ERRATUM OF PUBMED:7538070</scope>
    <scope>SEQUENCE REVISION</scope>
</reference>
<reference key="3">
    <citation type="journal article" date="2000" name="Science">
        <title>The genome sequence of Drosophila melanogaster.</title>
        <authorList>
            <person name="Adams M.D."/>
            <person name="Celniker S.E."/>
            <person name="Holt R.A."/>
            <person name="Evans C.A."/>
            <person name="Gocayne J.D."/>
            <person name="Amanatides P.G."/>
            <person name="Scherer S.E."/>
            <person name="Li P.W."/>
            <person name="Hoskins R.A."/>
            <person name="Galle R.F."/>
            <person name="George R.A."/>
            <person name="Lewis S.E."/>
            <person name="Richards S."/>
            <person name="Ashburner M."/>
            <person name="Henderson S.N."/>
            <person name="Sutton G.G."/>
            <person name="Wortman J.R."/>
            <person name="Yandell M.D."/>
            <person name="Zhang Q."/>
            <person name="Chen L.X."/>
            <person name="Brandon R.C."/>
            <person name="Rogers Y.-H.C."/>
            <person name="Blazej R.G."/>
            <person name="Champe M."/>
            <person name="Pfeiffer B.D."/>
            <person name="Wan K.H."/>
            <person name="Doyle C."/>
            <person name="Baxter E.G."/>
            <person name="Helt G."/>
            <person name="Nelson C.R."/>
            <person name="Miklos G.L.G."/>
            <person name="Abril J.F."/>
            <person name="Agbayani A."/>
            <person name="An H.-J."/>
            <person name="Andrews-Pfannkoch C."/>
            <person name="Baldwin D."/>
            <person name="Ballew R.M."/>
            <person name="Basu A."/>
            <person name="Baxendale J."/>
            <person name="Bayraktaroglu L."/>
            <person name="Beasley E.M."/>
            <person name="Beeson K.Y."/>
            <person name="Benos P.V."/>
            <person name="Berman B.P."/>
            <person name="Bhandari D."/>
            <person name="Bolshakov S."/>
            <person name="Borkova D."/>
            <person name="Botchan M.R."/>
            <person name="Bouck J."/>
            <person name="Brokstein P."/>
            <person name="Brottier P."/>
            <person name="Burtis K.C."/>
            <person name="Busam D.A."/>
            <person name="Butler H."/>
            <person name="Cadieu E."/>
            <person name="Center A."/>
            <person name="Chandra I."/>
            <person name="Cherry J.M."/>
            <person name="Cawley S."/>
            <person name="Dahlke C."/>
            <person name="Davenport L.B."/>
            <person name="Davies P."/>
            <person name="de Pablos B."/>
            <person name="Delcher A."/>
            <person name="Deng Z."/>
            <person name="Mays A.D."/>
            <person name="Dew I."/>
            <person name="Dietz S.M."/>
            <person name="Dodson K."/>
            <person name="Doup L.E."/>
            <person name="Downes M."/>
            <person name="Dugan-Rocha S."/>
            <person name="Dunkov B.C."/>
            <person name="Dunn P."/>
            <person name="Durbin K.J."/>
            <person name="Evangelista C.C."/>
            <person name="Ferraz C."/>
            <person name="Ferriera S."/>
            <person name="Fleischmann W."/>
            <person name="Fosler C."/>
            <person name="Gabrielian A.E."/>
            <person name="Garg N.S."/>
            <person name="Gelbart W.M."/>
            <person name="Glasser K."/>
            <person name="Glodek A."/>
            <person name="Gong F."/>
            <person name="Gorrell J.H."/>
            <person name="Gu Z."/>
            <person name="Guan P."/>
            <person name="Harris M."/>
            <person name="Harris N.L."/>
            <person name="Harvey D.A."/>
            <person name="Heiman T.J."/>
            <person name="Hernandez J.R."/>
            <person name="Houck J."/>
            <person name="Hostin D."/>
            <person name="Houston K.A."/>
            <person name="Howland T.J."/>
            <person name="Wei M.-H."/>
            <person name="Ibegwam C."/>
            <person name="Jalali M."/>
            <person name="Kalush F."/>
            <person name="Karpen G.H."/>
            <person name="Ke Z."/>
            <person name="Kennison J.A."/>
            <person name="Ketchum K.A."/>
            <person name="Kimmel B.E."/>
            <person name="Kodira C.D."/>
            <person name="Kraft C.L."/>
            <person name="Kravitz S."/>
            <person name="Kulp D."/>
            <person name="Lai Z."/>
            <person name="Lasko P."/>
            <person name="Lei Y."/>
            <person name="Levitsky A.A."/>
            <person name="Li J.H."/>
            <person name="Li Z."/>
            <person name="Liang Y."/>
            <person name="Lin X."/>
            <person name="Liu X."/>
            <person name="Mattei B."/>
            <person name="McIntosh T.C."/>
            <person name="McLeod M.P."/>
            <person name="McPherson D."/>
            <person name="Merkulov G."/>
            <person name="Milshina N.V."/>
            <person name="Mobarry C."/>
            <person name="Morris J."/>
            <person name="Moshrefi A."/>
            <person name="Mount S.M."/>
            <person name="Moy M."/>
            <person name="Murphy B."/>
            <person name="Murphy L."/>
            <person name="Muzny D.M."/>
            <person name="Nelson D.L."/>
            <person name="Nelson D.R."/>
            <person name="Nelson K.A."/>
            <person name="Nixon K."/>
            <person name="Nusskern D.R."/>
            <person name="Pacleb J.M."/>
            <person name="Palazzolo M."/>
            <person name="Pittman G.S."/>
            <person name="Pan S."/>
            <person name="Pollard J."/>
            <person name="Puri V."/>
            <person name="Reese M.G."/>
            <person name="Reinert K."/>
            <person name="Remington K."/>
            <person name="Saunders R.D.C."/>
            <person name="Scheeler F."/>
            <person name="Shen H."/>
            <person name="Shue B.C."/>
            <person name="Siden-Kiamos I."/>
            <person name="Simpson M."/>
            <person name="Skupski M.P."/>
            <person name="Smith T.J."/>
            <person name="Spier E."/>
            <person name="Spradling A.C."/>
            <person name="Stapleton M."/>
            <person name="Strong R."/>
            <person name="Sun E."/>
            <person name="Svirskas R."/>
            <person name="Tector C."/>
            <person name="Turner R."/>
            <person name="Venter E."/>
            <person name="Wang A.H."/>
            <person name="Wang X."/>
            <person name="Wang Z.-Y."/>
            <person name="Wassarman D.A."/>
            <person name="Weinstock G.M."/>
            <person name="Weissenbach J."/>
            <person name="Williams S.M."/>
            <person name="Woodage T."/>
            <person name="Worley K.C."/>
            <person name="Wu D."/>
            <person name="Yang S."/>
            <person name="Yao Q.A."/>
            <person name="Ye J."/>
            <person name="Yeh R.-F."/>
            <person name="Zaveri J.S."/>
            <person name="Zhan M."/>
            <person name="Zhang G."/>
            <person name="Zhao Q."/>
            <person name="Zheng L."/>
            <person name="Zheng X.H."/>
            <person name="Zhong F.N."/>
            <person name="Zhong W."/>
            <person name="Zhou X."/>
            <person name="Zhu S.C."/>
            <person name="Zhu X."/>
            <person name="Smith H.O."/>
            <person name="Gibbs R.A."/>
            <person name="Myers E.W."/>
            <person name="Rubin G.M."/>
            <person name="Venter J.C."/>
        </authorList>
    </citation>
    <scope>NUCLEOTIDE SEQUENCE [LARGE SCALE GENOMIC DNA]</scope>
    <source>
        <strain>Berkeley</strain>
    </source>
</reference>
<reference key="4">
    <citation type="journal article" date="2002" name="Genome Biol.">
        <title>Annotation of the Drosophila melanogaster euchromatic genome: a systematic review.</title>
        <authorList>
            <person name="Misra S."/>
            <person name="Crosby M.A."/>
            <person name="Mungall C.J."/>
            <person name="Matthews B.B."/>
            <person name="Campbell K.S."/>
            <person name="Hradecky P."/>
            <person name="Huang Y."/>
            <person name="Kaminker J.S."/>
            <person name="Millburn G.H."/>
            <person name="Prochnik S.E."/>
            <person name="Smith C.D."/>
            <person name="Tupy J.L."/>
            <person name="Whitfield E.J."/>
            <person name="Bayraktaroglu L."/>
            <person name="Berman B.P."/>
            <person name="Bettencourt B.R."/>
            <person name="Celniker S.E."/>
            <person name="de Grey A.D.N.J."/>
            <person name="Drysdale R.A."/>
            <person name="Harris N.L."/>
            <person name="Richter J."/>
            <person name="Russo S."/>
            <person name="Schroeder A.J."/>
            <person name="Shu S.Q."/>
            <person name="Stapleton M."/>
            <person name="Yamada C."/>
            <person name="Ashburner M."/>
            <person name="Gelbart W.M."/>
            <person name="Rubin G.M."/>
            <person name="Lewis S.E."/>
        </authorList>
    </citation>
    <scope>GENOME REANNOTATION</scope>
    <source>
        <strain>Berkeley</strain>
    </source>
</reference>
<reference key="5">
    <citation type="journal article" date="2002" name="Genome Biol.">
        <title>A Drosophila full-length cDNA resource.</title>
        <authorList>
            <person name="Stapleton M."/>
            <person name="Carlson J.W."/>
            <person name="Brokstein P."/>
            <person name="Yu C."/>
            <person name="Champe M."/>
            <person name="George R.A."/>
            <person name="Guarin H."/>
            <person name="Kronmiller B."/>
            <person name="Pacleb J.M."/>
            <person name="Park S."/>
            <person name="Wan K.H."/>
            <person name="Rubin G.M."/>
            <person name="Celniker S.E."/>
        </authorList>
    </citation>
    <scope>NUCLEOTIDE SEQUENCE [LARGE SCALE MRNA]</scope>
    <source>
        <strain>Berkeley</strain>
        <tissue>Embryo</tissue>
    </source>
</reference>
<reference key="6">
    <citation type="journal article" date="1998" name="Mol. Cell. Biol.">
        <title>Premature translation of oskar in oocytes lacking the RNA-binding protein bicaudal-C.</title>
        <authorList>
            <person name="Saffman E.E."/>
            <person name="Styhler S."/>
            <person name="Rother K."/>
            <person name="Li W."/>
            <person name="Richard S."/>
            <person name="Lasko P."/>
        </authorList>
    </citation>
    <scope>FUNCTION</scope>
    <scope>RNA-BINDING</scope>
    <scope>DEVELOPMENTAL STAGE</scope>
    <scope>MUTAGENESIS OF GLY-296</scope>
</reference>
<reference key="7">
    <citation type="journal article" date="2008" name="J. Proteome Res.">
        <title>Phosphoproteome analysis of Drosophila melanogaster embryos.</title>
        <authorList>
            <person name="Zhai B."/>
            <person name="Villen J."/>
            <person name="Beausoleil S.A."/>
            <person name="Mintseris J."/>
            <person name="Gygi S.P."/>
        </authorList>
    </citation>
    <scope>PHOSPHORYLATION [LARGE SCALE ANALYSIS] AT SER-557; SER-586; SER-639; SER-642; THR-643; TYR-644; SER-646; SER-666; SER-692; SER-695 AND TYR-696</scope>
    <scope>IDENTIFICATION BY MASS SPECTROMETRY</scope>
    <source>
        <tissue>Embryo</tissue>
    </source>
</reference>
<evidence type="ECO:0000255" key="1">
    <source>
        <dbReference type="PROSITE-ProRule" id="PRU00117"/>
    </source>
</evidence>
<evidence type="ECO:0000255" key="2">
    <source>
        <dbReference type="PROSITE-ProRule" id="PRU00184"/>
    </source>
</evidence>
<evidence type="ECO:0000256" key="3">
    <source>
        <dbReference type="SAM" id="MobiDB-lite"/>
    </source>
</evidence>
<evidence type="ECO:0000269" key="4">
    <source>
    </source>
</evidence>
<evidence type="ECO:0000269" key="5">
    <source>
    </source>
</evidence>
<evidence type="ECO:0000269" key="6">
    <source>
    </source>
</evidence>
<evidence type="ECO:0000305" key="7"/>
<sequence>MLSCASFNKLMYPSAADVAKPPMVGLEVEAGSIGSLSSLHALPSTTSVGSGAPSETQSEISSVDSDWSDIRAIAMKLGVQNPDDLHTERFKVDRQKLEQLIKAESSIEGMNGAEYFFHDIMNTTDTYVSWPCRLKIGAKSKKDPHVRIVGKVDQVQRAKERILSSLDSRGTRVIMKMDVSYTDHSYIIGRGGNNIKRIMDDTHTHIHFPDSNRSNPTEKSNQVSLCGSLEGVERARALVRLSTPLLISFEMPVMGPNKPQPDHETPYIKMIETKFNVQVIFSTRPKLHTSLVLVKGSEKESAQVRDATQLLINFACESIASQILVNVQMEISPQHHEIVKGKNNVNLLSIMERTQTKIIFPDLSDMNVKPLKKSQVTISGRIDDVYLARQQLLGNLPVALIFDFPDNHNDASEIMSLNTKYGVYITLRQKQRQSTLAIVVKGVEKFIDKIYEARQEILRLATPFVKPEIPDYYFMPKDKDLNLAYRTQLTALLAGYVDSPKTPSLLPPSLAGQLTPYANNNHLLLNANGLATPTGVCAPTQKYMQLHNSFQQAQNRSMVAGGQSNNGNYLQVPGAVAPPLKPPTVSPRNSCSQNTSGYQSFSSSTTSLEQSYPPYAQLPGTVSSTSSSTAGSQNRAHYSPDSTYGSEGGGVGGGGGGGARLGRRLSDGVLLGLSNSNGGGGNSGGAHLLPGSAESYRSLHYDLGGNKHSGHRAFDFDMKRALGYKAMERTPVAGELRTPTTAWMGMGLSSTSPAPAPLENGENGAAGGGASSGWRLPPGLGSPYGLSATTGLLDATPVNRRMQLAKHKDIQTLLTSLGLEHYIKIFVLNEIDLEVFTTLTEENLMELGIAAFGARKKLLTAIHTLLANEAACSTMPSSSSSQNSSSPRFSGSAAPGAERRPSNQW</sequence>
<keyword id="KW-0217">Developmental protein</keyword>
<keyword id="KW-0221">Differentiation</keyword>
<keyword id="KW-0896">Oogenesis</keyword>
<keyword id="KW-0597">Phosphoprotein</keyword>
<keyword id="KW-1185">Reference proteome</keyword>
<keyword id="KW-0677">Repeat</keyword>
<keyword id="KW-0694">RNA-binding</keyword>
<protein>
    <recommendedName>
        <fullName>Protein bicaudal C</fullName>
    </recommendedName>
</protein>
<organism>
    <name type="scientific">Drosophila melanogaster</name>
    <name type="common">Fruit fly</name>
    <dbReference type="NCBI Taxonomy" id="7227"/>
    <lineage>
        <taxon>Eukaryota</taxon>
        <taxon>Metazoa</taxon>
        <taxon>Ecdysozoa</taxon>
        <taxon>Arthropoda</taxon>
        <taxon>Hexapoda</taxon>
        <taxon>Insecta</taxon>
        <taxon>Pterygota</taxon>
        <taxon>Neoptera</taxon>
        <taxon>Endopterygota</taxon>
        <taxon>Diptera</taxon>
        <taxon>Brachycera</taxon>
        <taxon>Muscomorpha</taxon>
        <taxon>Ephydroidea</taxon>
        <taxon>Drosophilidae</taxon>
        <taxon>Drosophila</taxon>
        <taxon>Sophophora</taxon>
    </lineage>
</organism>
<dbReference type="EMBL" id="U15928">
    <property type="protein sequence ID" value="AAB51692.1"/>
    <property type="molecule type" value="Genomic_DNA"/>
</dbReference>
<dbReference type="EMBL" id="AE014134">
    <property type="protein sequence ID" value="AAN10927.1"/>
    <property type="molecule type" value="Genomic_DNA"/>
</dbReference>
<dbReference type="EMBL" id="AE014134">
    <property type="protein sequence ID" value="AAN10928.1"/>
    <property type="molecule type" value="Genomic_DNA"/>
</dbReference>
<dbReference type="EMBL" id="BT023837">
    <property type="protein sequence ID" value="AAZ86758.1"/>
    <property type="molecule type" value="mRNA"/>
</dbReference>
<dbReference type="PIR" id="S55051">
    <property type="entry name" value="S55051"/>
</dbReference>
<dbReference type="RefSeq" id="NP_476865.1">
    <property type="nucleotide sequence ID" value="NM_057517.3"/>
</dbReference>
<dbReference type="RefSeq" id="NP_723948.1">
    <property type="nucleotide sequence ID" value="NM_165144.2"/>
</dbReference>
<dbReference type="RefSeq" id="NP_723949.1">
    <property type="nucleotide sequence ID" value="NM_165145.1"/>
</dbReference>
<dbReference type="SMR" id="Q24009"/>
<dbReference type="BioGRID" id="60958">
    <property type="interactions" value="27"/>
</dbReference>
<dbReference type="FunCoup" id="Q24009">
    <property type="interactions" value="146"/>
</dbReference>
<dbReference type="IntAct" id="Q24009">
    <property type="interactions" value="5"/>
</dbReference>
<dbReference type="MINT" id="Q24009"/>
<dbReference type="STRING" id="7227.FBpp0080361"/>
<dbReference type="iPTMnet" id="Q24009"/>
<dbReference type="PaxDb" id="7227-FBpp0080361"/>
<dbReference type="EnsemblMetazoa" id="FBtr0080803">
    <property type="protein sequence ID" value="FBpp0080361"/>
    <property type="gene ID" value="FBgn0000182"/>
</dbReference>
<dbReference type="EnsemblMetazoa" id="FBtr0080804">
    <property type="protein sequence ID" value="FBpp0080362"/>
    <property type="gene ID" value="FBgn0000182"/>
</dbReference>
<dbReference type="GeneID" id="34946"/>
<dbReference type="KEGG" id="dme:Dmel_CG4824"/>
<dbReference type="AGR" id="FB:FBgn0000182"/>
<dbReference type="CTD" id="34946"/>
<dbReference type="FlyBase" id="FBgn0000182">
    <property type="gene designation" value="BicC"/>
</dbReference>
<dbReference type="VEuPathDB" id="VectorBase:FBgn0000182"/>
<dbReference type="eggNOG" id="KOG2208">
    <property type="taxonomic scope" value="Eukaryota"/>
</dbReference>
<dbReference type="eggNOG" id="KOG4374">
    <property type="taxonomic scope" value="Eukaryota"/>
</dbReference>
<dbReference type="GeneTree" id="ENSGT00940000169857"/>
<dbReference type="HOGENOM" id="CLU_008040_0_0_1"/>
<dbReference type="InParanoid" id="Q24009"/>
<dbReference type="OMA" id="LMYPTAA"/>
<dbReference type="OrthoDB" id="271862at2759"/>
<dbReference type="PhylomeDB" id="Q24009"/>
<dbReference type="SignaLink" id="Q24009"/>
<dbReference type="BioGRID-ORCS" id="34946">
    <property type="hits" value="0 hits in 1 CRISPR screen"/>
</dbReference>
<dbReference type="CD-CODE" id="19A54EA0">
    <property type="entry name" value="Sponge body"/>
</dbReference>
<dbReference type="CD-CODE" id="A6E1D014">
    <property type="entry name" value="P-body"/>
</dbReference>
<dbReference type="GenomeRNAi" id="34946"/>
<dbReference type="PRO" id="PR:Q24009"/>
<dbReference type="Proteomes" id="UP000000803">
    <property type="component" value="Chromosome 2L"/>
</dbReference>
<dbReference type="Bgee" id="FBgn0000182">
    <property type="expression patterns" value="Expressed in ovary and 13 other cell types or tissues"/>
</dbReference>
<dbReference type="ExpressionAtlas" id="Q24009">
    <property type="expression patterns" value="baseline and differential"/>
</dbReference>
<dbReference type="GO" id="GO:0005737">
    <property type="term" value="C:cytoplasm"/>
    <property type="evidence" value="ECO:0000318"/>
    <property type="project" value="GO_Central"/>
</dbReference>
<dbReference type="GO" id="GO:0003729">
    <property type="term" value="F:mRNA binding"/>
    <property type="evidence" value="ECO:0000314"/>
    <property type="project" value="FlyBase"/>
</dbReference>
<dbReference type="GO" id="GO:0030036">
    <property type="term" value="P:actin cytoskeleton organization"/>
    <property type="evidence" value="ECO:0000315"/>
    <property type="project" value="FlyBase"/>
</dbReference>
<dbReference type="GO" id="GO:0007297">
    <property type="term" value="P:follicle cell of egg chamber migration"/>
    <property type="evidence" value="ECO:0007001"/>
    <property type="project" value="FlyBase"/>
</dbReference>
<dbReference type="GO" id="GO:0000226">
    <property type="term" value="P:microtubule cytoskeleton organization"/>
    <property type="evidence" value="ECO:0000315"/>
    <property type="project" value="FlyBase"/>
</dbReference>
<dbReference type="GO" id="GO:0000278">
    <property type="term" value="P:mitotic cell cycle"/>
    <property type="evidence" value="ECO:0007001"/>
    <property type="project" value="FlyBase"/>
</dbReference>
<dbReference type="GO" id="GO:0007319">
    <property type="term" value="P:negative regulation of oskar mRNA translation"/>
    <property type="evidence" value="ECO:0000304"/>
    <property type="project" value="FlyBase"/>
</dbReference>
<dbReference type="GO" id="GO:0048477">
    <property type="term" value="P:oogenesis"/>
    <property type="evidence" value="ECO:0007001"/>
    <property type="project" value="FlyBase"/>
</dbReference>
<dbReference type="CDD" id="cd22420">
    <property type="entry name" value="KH-I_BICC1_rpt1"/>
    <property type="match status" value="1"/>
</dbReference>
<dbReference type="CDD" id="cd22421">
    <property type="entry name" value="KH-I_BICC1_rpt2"/>
    <property type="match status" value="1"/>
</dbReference>
<dbReference type="CDD" id="cd22422">
    <property type="entry name" value="KH-I_BICC1_rpt3"/>
    <property type="match status" value="1"/>
</dbReference>
<dbReference type="CDD" id="cd09520">
    <property type="entry name" value="SAM_BICC1"/>
    <property type="match status" value="1"/>
</dbReference>
<dbReference type="FunFam" id="1.10.150.50:FF:000103">
    <property type="entry name" value="Bicaudal C, isoform B"/>
    <property type="match status" value="1"/>
</dbReference>
<dbReference type="FunFam" id="3.30.310.270:FF:000002">
    <property type="entry name" value="BicC family RNA binding protein 1"/>
    <property type="match status" value="1"/>
</dbReference>
<dbReference type="FunFam" id="3.30.310.270:FF:000003">
    <property type="entry name" value="Blast:Protein bicaudal C"/>
    <property type="match status" value="1"/>
</dbReference>
<dbReference type="Gene3D" id="3.30.310.270">
    <property type="match status" value="2"/>
</dbReference>
<dbReference type="Gene3D" id="1.10.150.50">
    <property type="entry name" value="Transcription Factor, Ets-1"/>
    <property type="match status" value="1"/>
</dbReference>
<dbReference type="InterPro" id="IPR054727">
    <property type="entry name" value="BICC1_KH"/>
</dbReference>
<dbReference type="InterPro" id="IPR047549">
    <property type="entry name" value="BICC1_KH-I_rpt1"/>
</dbReference>
<dbReference type="InterPro" id="IPR047554">
    <property type="entry name" value="BICC1_KH-I_rpt2"/>
</dbReference>
<dbReference type="InterPro" id="IPR047553">
    <property type="entry name" value="BICC1_KH-I_rpt3"/>
</dbReference>
<dbReference type="InterPro" id="IPR037974">
    <property type="entry name" value="BICC1_SAM_dom"/>
</dbReference>
<dbReference type="InterPro" id="IPR004087">
    <property type="entry name" value="KH_dom"/>
</dbReference>
<dbReference type="InterPro" id="IPR004088">
    <property type="entry name" value="KH_dom_type_1"/>
</dbReference>
<dbReference type="InterPro" id="IPR036612">
    <property type="entry name" value="KH_dom_type_1_sf"/>
</dbReference>
<dbReference type="InterPro" id="IPR001660">
    <property type="entry name" value="SAM"/>
</dbReference>
<dbReference type="InterPro" id="IPR013761">
    <property type="entry name" value="SAM/pointed_sf"/>
</dbReference>
<dbReference type="PANTHER" id="PTHR10627:SF69">
    <property type="entry name" value="PROTEIN BICAUDAL C"/>
    <property type="match status" value="1"/>
</dbReference>
<dbReference type="PANTHER" id="PTHR10627">
    <property type="entry name" value="SCP160"/>
    <property type="match status" value="1"/>
</dbReference>
<dbReference type="Pfam" id="PF00013">
    <property type="entry name" value="KH_1"/>
    <property type="match status" value="2"/>
</dbReference>
<dbReference type="Pfam" id="PF22985">
    <property type="entry name" value="KH_BICC1"/>
    <property type="match status" value="2"/>
</dbReference>
<dbReference type="Pfam" id="PF24234">
    <property type="entry name" value="KH_BICC1_1st"/>
    <property type="match status" value="1"/>
</dbReference>
<dbReference type="Pfam" id="PF00536">
    <property type="entry name" value="SAM_1"/>
    <property type="match status" value="1"/>
</dbReference>
<dbReference type="SMART" id="SM00322">
    <property type="entry name" value="KH"/>
    <property type="match status" value="2"/>
</dbReference>
<dbReference type="SMART" id="SM00454">
    <property type="entry name" value="SAM"/>
    <property type="match status" value="1"/>
</dbReference>
<dbReference type="SUPFAM" id="SSF54791">
    <property type="entry name" value="Eukaryotic type KH-domain (KH-domain type I)"/>
    <property type="match status" value="2"/>
</dbReference>
<dbReference type="SUPFAM" id="SSF47769">
    <property type="entry name" value="SAM/Pointed domain"/>
    <property type="match status" value="1"/>
</dbReference>
<dbReference type="PROSITE" id="PS50084">
    <property type="entry name" value="KH_TYPE_1"/>
    <property type="match status" value="2"/>
</dbReference>
<dbReference type="PROSITE" id="PS50105">
    <property type="entry name" value="SAM_DOMAIN"/>
    <property type="match status" value="1"/>
</dbReference>
<feature type="chain" id="PRO_0000267718" description="Protein bicaudal C">
    <location>
        <begin position="1"/>
        <end position="905"/>
    </location>
</feature>
<feature type="domain" description="KH 1" evidence="1">
    <location>
        <begin position="172"/>
        <end position="239"/>
    </location>
</feature>
<feature type="domain" description="KH 2" evidence="1">
    <location>
        <begin position="324"/>
        <end position="392"/>
    </location>
</feature>
<feature type="domain" description="SAM" evidence="2">
    <location>
        <begin position="805"/>
        <end position="868"/>
    </location>
</feature>
<feature type="region of interest" description="Disordered" evidence="3">
    <location>
        <begin position="559"/>
        <end position="660"/>
    </location>
</feature>
<feature type="region of interest" description="Disordered" evidence="3">
    <location>
        <begin position="751"/>
        <end position="772"/>
    </location>
</feature>
<feature type="region of interest" description="Disordered" evidence="3">
    <location>
        <begin position="874"/>
        <end position="905"/>
    </location>
</feature>
<feature type="compositionally biased region" description="Polar residues" evidence="3">
    <location>
        <begin position="559"/>
        <end position="569"/>
    </location>
</feature>
<feature type="compositionally biased region" description="Low complexity" evidence="3">
    <location>
        <begin position="592"/>
        <end position="611"/>
    </location>
</feature>
<feature type="compositionally biased region" description="Polar residues" evidence="3">
    <location>
        <begin position="630"/>
        <end position="645"/>
    </location>
</feature>
<feature type="compositionally biased region" description="Gly residues" evidence="3">
    <location>
        <begin position="646"/>
        <end position="660"/>
    </location>
</feature>
<feature type="compositionally biased region" description="Low complexity" evidence="3">
    <location>
        <begin position="874"/>
        <end position="892"/>
    </location>
</feature>
<feature type="modified residue" description="Phosphoserine" evidence="4">
    <location>
        <position position="557"/>
    </location>
</feature>
<feature type="modified residue" description="Phosphoserine" evidence="4">
    <location>
        <position position="586"/>
    </location>
</feature>
<feature type="modified residue" description="Phosphoserine" evidence="4">
    <location>
        <position position="639"/>
    </location>
</feature>
<feature type="modified residue" description="Phosphoserine" evidence="4">
    <location>
        <position position="642"/>
    </location>
</feature>
<feature type="modified residue" description="Phosphothreonine" evidence="4">
    <location>
        <position position="643"/>
    </location>
</feature>
<feature type="modified residue" description="Phosphotyrosine" evidence="4">
    <location>
        <position position="644"/>
    </location>
</feature>
<feature type="modified residue" description="Phosphoserine" evidence="4">
    <location>
        <position position="646"/>
    </location>
</feature>
<feature type="modified residue" description="Phosphoserine" evidence="4">
    <location>
        <position position="666"/>
    </location>
</feature>
<feature type="modified residue" description="Phosphoserine" evidence="4">
    <location>
        <position position="692"/>
    </location>
</feature>
<feature type="modified residue" description="Phosphoserine" evidence="4">
    <location>
        <position position="695"/>
    </location>
</feature>
<feature type="modified residue" description="Phosphotyrosine" evidence="4">
    <location>
        <position position="696"/>
    </location>
</feature>
<feature type="mutagenesis site" description="In allele RU-35; bicaudal phenotype; lowers RNA-binding." evidence="6">
    <original>G</original>
    <variation>R</variation>
    <location>
        <position position="296"/>
    </location>
</feature>